<keyword id="KW-0968">Cytoplasmic vesicle</keyword>
<keyword id="KW-0472">Membrane</keyword>
<keyword id="KW-0653">Protein transport</keyword>
<keyword id="KW-1185">Reference proteome</keyword>
<keyword id="KW-0732">Signal</keyword>
<keyword id="KW-0812">Transmembrane</keyword>
<keyword id="KW-1133">Transmembrane helix</keyword>
<keyword id="KW-0813">Transport</keyword>
<name>TMEDA_DICDI</name>
<feature type="signal peptide" evidence="2">
    <location>
        <begin position="1"/>
        <end position="24"/>
    </location>
</feature>
<feature type="chain" id="PRO_0000342022" description="Transmembrane emp24 domain-containing protein A">
    <location>
        <begin position="25"/>
        <end position="205"/>
    </location>
</feature>
<feature type="topological domain" description="Lumenal" evidence="2">
    <location>
        <begin position="25"/>
        <end position="172"/>
    </location>
</feature>
<feature type="transmembrane region" description="Helical" evidence="2">
    <location>
        <begin position="173"/>
        <end position="193"/>
    </location>
</feature>
<feature type="topological domain" description="Cytoplasmic" evidence="2">
    <location>
        <begin position="194"/>
        <end position="205"/>
    </location>
</feature>
<feature type="domain" description="GOLD" evidence="3">
    <location>
        <begin position="34"/>
        <end position="116"/>
    </location>
</feature>
<reference key="1">
    <citation type="submission" date="2003-06" db="EMBL/GenBank/DDBJ databases">
        <title>Regulation of development by Ddp24 genes, a family of genes involved in COPI/II-coated vesicle trafficking.</title>
        <authorList>
            <person name="Morio T."/>
            <person name="Kuwabara Y."/>
            <person name="Sawayama M."/>
            <person name="Kuwayama H."/>
            <person name="Kawabae Y."/>
            <person name="Tanaka Y."/>
        </authorList>
    </citation>
    <scope>NUCLEOTIDE SEQUENCE [GENOMIC DNA]</scope>
    <source>
        <strain>AX4</strain>
    </source>
</reference>
<reference key="2">
    <citation type="journal article" date="2005" name="Nature">
        <title>The genome of the social amoeba Dictyostelium discoideum.</title>
        <authorList>
            <person name="Eichinger L."/>
            <person name="Pachebat J.A."/>
            <person name="Gloeckner G."/>
            <person name="Rajandream M.A."/>
            <person name="Sucgang R."/>
            <person name="Berriman M."/>
            <person name="Song J."/>
            <person name="Olsen R."/>
            <person name="Szafranski K."/>
            <person name="Xu Q."/>
            <person name="Tunggal B."/>
            <person name="Kummerfeld S."/>
            <person name="Madera M."/>
            <person name="Konfortov B.A."/>
            <person name="Rivero F."/>
            <person name="Bankier A.T."/>
            <person name="Lehmann R."/>
            <person name="Hamlin N."/>
            <person name="Davies R."/>
            <person name="Gaudet P."/>
            <person name="Fey P."/>
            <person name="Pilcher K."/>
            <person name="Chen G."/>
            <person name="Saunders D."/>
            <person name="Sodergren E.J."/>
            <person name="Davis P."/>
            <person name="Kerhornou A."/>
            <person name="Nie X."/>
            <person name="Hall N."/>
            <person name="Anjard C."/>
            <person name="Hemphill L."/>
            <person name="Bason N."/>
            <person name="Farbrother P."/>
            <person name="Desany B."/>
            <person name="Just E."/>
            <person name="Morio T."/>
            <person name="Rost R."/>
            <person name="Churcher C.M."/>
            <person name="Cooper J."/>
            <person name="Haydock S."/>
            <person name="van Driessche N."/>
            <person name="Cronin A."/>
            <person name="Goodhead I."/>
            <person name="Muzny D.M."/>
            <person name="Mourier T."/>
            <person name="Pain A."/>
            <person name="Lu M."/>
            <person name="Harper D."/>
            <person name="Lindsay R."/>
            <person name="Hauser H."/>
            <person name="James K.D."/>
            <person name="Quiles M."/>
            <person name="Madan Babu M."/>
            <person name="Saito T."/>
            <person name="Buchrieser C."/>
            <person name="Wardroper A."/>
            <person name="Felder M."/>
            <person name="Thangavelu M."/>
            <person name="Johnson D."/>
            <person name="Knights A."/>
            <person name="Loulseged H."/>
            <person name="Mungall K.L."/>
            <person name="Oliver K."/>
            <person name="Price C."/>
            <person name="Quail M.A."/>
            <person name="Urushihara H."/>
            <person name="Hernandez J."/>
            <person name="Rabbinowitsch E."/>
            <person name="Steffen D."/>
            <person name="Sanders M."/>
            <person name="Ma J."/>
            <person name="Kohara Y."/>
            <person name="Sharp S."/>
            <person name="Simmonds M.N."/>
            <person name="Spiegler S."/>
            <person name="Tivey A."/>
            <person name="Sugano S."/>
            <person name="White B."/>
            <person name="Walker D."/>
            <person name="Woodward J.R."/>
            <person name="Winckler T."/>
            <person name="Tanaka Y."/>
            <person name="Shaulsky G."/>
            <person name="Schleicher M."/>
            <person name="Weinstock G.M."/>
            <person name="Rosenthal A."/>
            <person name="Cox E.C."/>
            <person name="Chisholm R.L."/>
            <person name="Gibbs R.A."/>
            <person name="Loomis W.F."/>
            <person name="Platzer M."/>
            <person name="Kay R.R."/>
            <person name="Williams J.G."/>
            <person name="Dear P.H."/>
            <person name="Noegel A.A."/>
            <person name="Barrell B.G."/>
            <person name="Kuspa A."/>
        </authorList>
    </citation>
    <scope>NUCLEOTIDE SEQUENCE [LARGE SCALE GENOMIC DNA]</scope>
    <source>
        <strain>AX4</strain>
    </source>
</reference>
<comment type="function">
    <text evidence="1">Could have a role in the budding of coatomer-coated and other species of coated vesicles.</text>
</comment>
<comment type="subcellular location">
    <subcellularLocation>
        <location evidence="1">Cytoplasmic vesicle membrane</location>
        <topology evidence="1">Single-pass type I membrane protein</topology>
    </subcellularLocation>
</comment>
<comment type="similarity">
    <text evidence="4">Belongs to the EMP24/GP25L family.</text>
</comment>
<proteinExistence type="inferred from homology"/>
<accession>Q769F9</accession>
<accession>Q54JH1</accession>
<protein>
    <recommendedName>
        <fullName>Transmembrane emp24 domain-containing protein A</fullName>
    </recommendedName>
</protein>
<dbReference type="EMBL" id="AB112541">
    <property type="protein sequence ID" value="BAD05160.1"/>
    <property type="molecule type" value="Genomic_DNA"/>
</dbReference>
<dbReference type="EMBL" id="AAFI02000107">
    <property type="protein sequence ID" value="EAL63452.1"/>
    <property type="molecule type" value="Genomic_DNA"/>
</dbReference>
<dbReference type="RefSeq" id="XP_636960.1">
    <property type="nucleotide sequence ID" value="XM_631868.1"/>
</dbReference>
<dbReference type="SMR" id="Q769F9"/>
<dbReference type="FunCoup" id="Q769F9">
    <property type="interactions" value="1395"/>
</dbReference>
<dbReference type="STRING" id="44689.Q769F9"/>
<dbReference type="PaxDb" id="44689-DDB0201636"/>
<dbReference type="EnsemblProtists" id="EAL63452">
    <property type="protein sequence ID" value="EAL63452"/>
    <property type="gene ID" value="DDB_G0288053"/>
</dbReference>
<dbReference type="GeneID" id="8626435"/>
<dbReference type="KEGG" id="ddi:DDB_G0288053"/>
<dbReference type="dictyBase" id="DDB_G0288053">
    <property type="gene designation" value="empA"/>
</dbReference>
<dbReference type="VEuPathDB" id="AmoebaDB:DDB_G0288053"/>
<dbReference type="eggNOG" id="KOG1692">
    <property type="taxonomic scope" value="Eukaryota"/>
</dbReference>
<dbReference type="HOGENOM" id="CLU_066963_4_1_1"/>
<dbReference type="InParanoid" id="Q769F9"/>
<dbReference type="OMA" id="NPHAEEC"/>
<dbReference type="PhylomeDB" id="Q769F9"/>
<dbReference type="Reactome" id="R-DDI-6807878">
    <property type="pathway name" value="COPI-mediated anterograde transport"/>
</dbReference>
<dbReference type="Reactome" id="R-DDI-6811434">
    <property type="pathway name" value="COPI-dependent Golgi-to-ER retrograde traffic"/>
</dbReference>
<dbReference type="PRO" id="PR:Q769F9"/>
<dbReference type="Proteomes" id="UP000002195">
    <property type="component" value="Chromosome 5"/>
</dbReference>
<dbReference type="GO" id="GO:0030134">
    <property type="term" value="C:COPII-coated ER to Golgi transport vesicle"/>
    <property type="evidence" value="ECO:0000318"/>
    <property type="project" value="GO_Central"/>
</dbReference>
<dbReference type="GO" id="GO:0030659">
    <property type="term" value="C:cytoplasmic vesicle membrane"/>
    <property type="evidence" value="ECO:0007669"/>
    <property type="project" value="UniProtKB-SubCell"/>
</dbReference>
<dbReference type="GO" id="GO:0005783">
    <property type="term" value="C:endoplasmic reticulum"/>
    <property type="evidence" value="ECO:0000318"/>
    <property type="project" value="GO_Central"/>
</dbReference>
<dbReference type="GO" id="GO:0005793">
    <property type="term" value="C:endoplasmic reticulum-Golgi intermediate compartment"/>
    <property type="evidence" value="ECO:0000318"/>
    <property type="project" value="GO_Central"/>
</dbReference>
<dbReference type="GO" id="GO:0005794">
    <property type="term" value="C:Golgi apparatus"/>
    <property type="evidence" value="ECO:0000318"/>
    <property type="project" value="GO_Central"/>
</dbReference>
<dbReference type="GO" id="GO:0006888">
    <property type="term" value="P:endoplasmic reticulum to Golgi vesicle-mediated transport"/>
    <property type="evidence" value="ECO:0000318"/>
    <property type="project" value="GO_Central"/>
</dbReference>
<dbReference type="GO" id="GO:0007030">
    <property type="term" value="P:Golgi organization"/>
    <property type="evidence" value="ECO:0000318"/>
    <property type="project" value="GO_Central"/>
</dbReference>
<dbReference type="GO" id="GO:0006886">
    <property type="term" value="P:intracellular protein transport"/>
    <property type="evidence" value="ECO:0000318"/>
    <property type="project" value="GO_Central"/>
</dbReference>
<dbReference type="InterPro" id="IPR015720">
    <property type="entry name" value="Emp24-like"/>
</dbReference>
<dbReference type="InterPro" id="IPR009038">
    <property type="entry name" value="GOLD_dom"/>
</dbReference>
<dbReference type="InterPro" id="IPR036598">
    <property type="entry name" value="GOLD_dom_sf"/>
</dbReference>
<dbReference type="PANTHER" id="PTHR22811">
    <property type="entry name" value="TRANSMEMBRANE EMP24 DOMAIN-CONTAINING PROTEIN"/>
    <property type="match status" value="1"/>
</dbReference>
<dbReference type="Pfam" id="PF01105">
    <property type="entry name" value="EMP24_GP25L"/>
    <property type="match status" value="1"/>
</dbReference>
<dbReference type="SMART" id="SM01190">
    <property type="entry name" value="EMP24_GP25L"/>
    <property type="match status" value="1"/>
</dbReference>
<dbReference type="SUPFAM" id="SSF101576">
    <property type="entry name" value="Supernatant protein factor (SPF), C-terminal domain"/>
    <property type="match status" value="1"/>
</dbReference>
<dbReference type="PROSITE" id="PS50866">
    <property type="entry name" value="GOLD"/>
    <property type="match status" value="1"/>
</dbReference>
<evidence type="ECO:0000250" key="1"/>
<evidence type="ECO:0000255" key="2"/>
<evidence type="ECO:0000255" key="3">
    <source>
        <dbReference type="PROSITE-ProRule" id="PRU00096"/>
    </source>
</evidence>
<evidence type="ECO:0000305" key="4"/>
<sequence>MMNNKLLLLVIALLCIASNSIVESFSFKVSAKVEECIYEEIGVDLSFTAMFQVIQGGFNDIDFTIISPDKRIVYSGQRESEGTKTLRSSFAGVYSFCFSNKMSSLTDKTVSFILSVGESSPIREIAKKKDLTPIERSIMTLSDGVIAVKNEQNYFKMREAAHRNTAESTNSRVLWWSVFEAFVLIALSIWQIYYLRRFFEVKRAV</sequence>
<organism>
    <name type="scientific">Dictyostelium discoideum</name>
    <name type="common">Social amoeba</name>
    <dbReference type="NCBI Taxonomy" id="44689"/>
    <lineage>
        <taxon>Eukaryota</taxon>
        <taxon>Amoebozoa</taxon>
        <taxon>Evosea</taxon>
        <taxon>Eumycetozoa</taxon>
        <taxon>Dictyostelia</taxon>
        <taxon>Dictyosteliales</taxon>
        <taxon>Dictyosteliaceae</taxon>
        <taxon>Dictyostelium</taxon>
    </lineage>
</organism>
<gene>
    <name type="primary">empA</name>
    <name type="ORF">DDB_G0288053</name>
</gene>